<feature type="chain" id="PRO_0000077285" description="Type II restriction enzyme BglI">
    <location>
        <begin position="1"/>
        <end position="299"/>
    </location>
</feature>
<feature type="binding site">
    <location>
        <position position="116"/>
    </location>
    <ligand>
        <name>Mg(2+)</name>
        <dbReference type="ChEBI" id="CHEBI:18420"/>
        <label>1</label>
    </ligand>
</feature>
<feature type="binding site">
    <location>
        <position position="116"/>
    </location>
    <ligand>
        <name>Mg(2+)</name>
        <dbReference type="ChEBI" id="CHEBI:18420"/>
        <label>2</label>
    </ligand>
</feature>
<feature type="binding site">
    <location>
        <position position="142"/>
    </location>
    <ligand>
        <name>Mg(2+)</name>
        <dbReference type="ChEBI" id="CHEBI:18420"/>
        <label>1</label>
    </ligand>
</feature>
<feature type="binding site">
    <location>
        <position position="143"/>
    </location>
    <ligand>
        <name>Mg(2+)</name>
        <dbReference type="ChEBI" id="CHEBI:18420"/>
        <label>1</label>
    </ligand>
</feature>
<feature type="turn" evidence="3">
    <location>
        <begin position="2"/>
        <end position="5"/>
    </location>
</feature>
<feature type="helix" evidence="3">
    <location>
        <begin position="6"/>
        <end position="22"/>
    </location>
</feature>
<feature type="helix" evidence="3">
    <location>
        <begin position="24"/>
        <end position="44"/>
    </location>
</feature>
<feature type="helix" evidence="3">
    <location>
        <begin position="46"/>
        <end position="58"/>
    </location>
</feature>
<feature type="helix" evidence="3">
    <location>
        <begin position="60"/>
        <end position="63"/>
    </location>
</feature>
<feature type="strand" evidence="3">
    <location>
        <begin position="72"/>
        <end position="74"/>
    </location>
</feature>
<feature type="helix" evidence="3">
    <location>
        <begin position="83"/>
        <end position="89"/>
    </location>
</feature>
<feature type="helix" evidence="3">
    <location>
        <begin position="91"/>
        <end position="99"/>
    </location>
</feature>
<feature type="strand" evidence="3">
    <location>
        <begin position="105"/>
        <end position="107"/>
    </location>
</feature>
<feature type="strand" evidence="3">
    <location>
        <begin position="116"/>
        <end position="122"/>
    </location>
</feature>
<feature type="helix" evidence="3">
    <location>
        <begin position="124"/>
        <end position="129"/>
    </location>
</feature>
<feature type="turn" evidence="3">
    <location>
        <begin position="130"/>
        <end position="132"/>
    </location>
</feature>
<feature type="strand" evidence="3">
    <location>
        <begin position="135"/>
        <end position="143"/>
    </location>
</feature>
<feature type="strand" evidence="3">
    <location>
        <begin position="154"/>
        <end position="157"/>
    </location>
</feature>
<feature type="helix" evidence="3">
    <location>
        <begin position="159"/>
        <end position="161"/>
    </location>
</feature>
<feature type="strand" evidence="3">
    <location>
        <begin position="180"/>
        <end position="183"/>
    </location>
</feature>
<feature type="strand" evidence="3">
    <location>
        <begin position="188"/>
        <end position="191"/>
    </location>
</feature>
<feature type="strand" evidence="3">
    <location>
        <begin position="197"/>
        <end position="200"/>
    </location>
</feature>
<feature type="strand" evidence="3">
    <location>
        <begin position="206"/>
        <end position="220"/>
    </location>
</feature>
<feature type="helix" evidence="3">
    <location>
        <begin position="221"/>
        <end position="223"/>
    </location>
</feature>
<feature type="strand" evidence="3">
    <location>
        <begin position="230"/>
        <end position="240"/>
    </location>
</feature>
<feature type="helix" evidence="3">
    <location>
        <begin position="243"/>
        <end position="247"/>
    </location>
</feature>
<feature type="helix" evidence="3">
    <location>
        <begin position="252"/>
        <end position="254"/>
    </location>
</feature>
<feature type="helix" evidence="3">
    <location>
        <begin position="256"/>
        <end position="258"/>
    </location>
</feature>
<feature type="strand" evidence="3">
    <location>
        <begin position="261"/>
        <end position="264"/>
    </location>
</feature>
<feature type="strand" evidence="3">
    <location>
        <begin position="278"/>
        <end position="281"/>
    </location>
</feature>
<feature type="helix" evidence="3">
    <location>
        <begin position="282"/>
        <end position="285"/>
    </location>
</feature>
<feature type="strand" evidence="3">
    <location>
        <begin position="288"/>
        <end position="290"/>
    </location>
</feature>
<feature type="strand" evidence="3">
    <location>
        <begin position="292"/>
        <end position="296"/>
    </location>
</feature>
<comment type="function">
    <text evidence="1 2">A P subtype restriction enzyme that recognizes the double-stranded sequence 5'-GCCNNNNNGGC-3' and cleaves before N-8.</text>
</comment>
<comment type="catalytic activity">
    <reaction evidence="1">
        <text>Endonucleolytic cleavage of DNA to give specific double-stranded fragments with terminal 5'-phosphates.</text>
        <dbReference type="EC" id="3.1.21.4"/>
    </reaction>
</comment>
<comment type="cofactor">
    <cofactor>
        <name>Mg(2+)</name>
        <dbReference type="ChEBI" id="CHEBI:18420"/>
    </cofactor>
    <text>Binds 2 magnesium ions per subunit.</text>
</comment>
<comment type="subunit">
    <text evidence="1">Homodimer.</text>
</comment>
<proteinExistence type="evidence at protein level"/>
<evidence type="ECO:0000269" key="1">
    <source>
    </source>
</evidence>
<evidence type="ECO:0000303" key="2">
    <source>
    </source>
</evidence>
<evidence type="ECO:0007829" key="3">
    <source>
        <dbReference type="PDB" id="1DMU"/>
    </source>
</evidence>
<protein>
    <recommendedName>
        <fullName evidence="2">Type II restriction enzyme BglI</fullName>
        <shortName>R.BglI</shortName>
        <ecNumber evidence="1">3.1.21.4</ecNumber>
    </recommendedName>
    <alternativeName>
        <fullName>Endonuclease BglI</fullName>
    </alternativeName>
    <alternativeName>
        <fullName>Type-2 restriction enzyme BglI</fullName>
    </alternativeName>
</protein>
<organism>
    <name type="scientific">Bacillus subtilis</name>
    <dbReference type="NCBI Taxonomy" id="1423"/>
    <lineage>
        <taxon>Bacteria</taxon>
        <taxon>Bacillati</taxon>
        <taxon>Bacillota</taxon>
        <taxon>Bacilli</taxon>
        <taxon>Bacillales</taxon>
        <taxon>Bacillaceae</taxon>
        <taxon>Bacillus</taxon>
    </lineage>
</organism>
<keyword id="KW-0002">3D-structure</keyword>
<keyword id="KW-0255">Endonuclease</keyword>
<keyword id="KW-0378">Hydrolase</keyword>
<keyword id="KW-0460">Magnesium</keyword>
<keyword id="KW-0479">Metal-binding</keyword>
<keyword id="KW-0540">Nuclease</keyword>
<keyword id="KW-0680">Restriction system</keyword>
<accession>O68557</accession>
<dbReference type="EC" id="3.1.21.4" evidence="1"/>
<dbReference type="EMBL" id="AF050216">
    <property type="protein sequence ID" value="AAC63973.1"/>
    <property type="molecule type" value="Genomic_DNA"/>
</dbReference>
<dbReference type="PDB" id="1DMU">
    <property type="method" value="X-ray"/>
    <property type="resolution" value="2.20 A"/>
    <property type="chains" value="A=1-299"/>
</dbReference>
<dbReference type="PDBsum" id="1DMU"/>
<dbReference type="SMR" id="O68557"/>
<dbReference type="EvolutionaryTrace" id="O68557"/>
<dbReference type="PRO" id="PR:O68557"/>
<dbReference type="GO" id="GO:0046872">
    <property type="term" value="F:metal ion binding"/>
    <property type="evidence" value="ECO:0007669"/>
    <property type="project" value="UniProtKB-KW"/>
</dbReference>
<dbReference type="GO" id="GO:0009036">
    <property type="term" value="F:type II site-specific deoxyribonuclease activity"/>
    <property type="evidence" value="ECO:0007669"/>
    <property type="project" value="UniProtKB-EC"/>
</dbReference>
<dbReference type="GO" id="GO:0009307">
    <property type="term" value="P:DNA restriction-modification system"/>
    <property type="evidence" value="ECO:0007669"/>
    <property type="project" value="UniProtKB-KW"/>
</dbReference>
<dbReference type="CDD" id="cd22311">
    <property type="entry name" value="BglI-like"/>
    <property type="match status" value="1"/>
</dbReference>
<dbReference type="Gene3D" id="3.40.600.20">
    <property type="entry name" value="Restriction endonuclease BglI"/>
    <property type="match status" value="1"/>
</dbReference>
<dbReference type="InterPro" id="IPR011335">
    <property type="entry name" value="Restrct_endonuc-II-like"/>
</dbReference>
<dbReference type="InterPro" id="IPR011543">
    <property type="entry name" value="Restrct_endonuc_II_BglI"/>
</dbReference>
<dbReference type="InterPro" id="IPR043121">
    <property type="entry name" value="Restrct_endonuc_II_BglI_sf"/>
</dbReference>
<dbReference type="Pfam" id="PF14562">
    <property type="entry name" value="Endonuc_BglI"/>
    <property type="match status" value="1"/>
</dbReference>
<dbReference type="SUPFAM" id="SSF52980">
    <property type="entry name" value="Restriction endonuclease-like"/>
    <property type="match status" value="1"/>
</dbReference>
<reference key="1">
    <citation type="journal article" date="1998" name="EMBO J.">
        <title>Crystal structure of restriction endonuclease BglI bound to its interrupted DNA recognition sequence.</title>
        <authorList>
            <person name="Newman M."/>
            <person name="Lunnen K.D."/>
            <person name="Wilson G.G."/>
            <person name="Greci J."/>
            <person name="Schildkraut I."/>
            <person name="Philips S.E.V."/>
        </authorList>
    </citation>
    <scope>NUCLEOTIDE SEQUENCE [GENOMIC DNA]</scope>
    <scope>X-RAY CRYSTALLOGRAPHY (2.2 ANGSTROMS)</scope>
    <scope>FUNCTION</scope>
    <scope>CATALYTIC ACTIVITY</scope>
    <scope>SUBUNIT</scope>
    <source>
        <strain>Globigii / RUB562</strain>
    </source>
</reference>
<reference key="2">
    <citation type="journal article" date="2003" name="Nucleic Acids Res.">
        <title>A nomenclature for restriction enzymes, DNA methyltransferases, homing endonucleases and their genes.</title>
        <authorList>
            <person name="Roberts R.J."/>
            <person name="Belfort M."/>
            <person name="Bestor T."/>
            <person name="Bhagwat A.S."/>
            <person name="Bickle T.A."/>
            <person name="Bitinaite J."/>
            <person name="Blumenthal R.M."/>
            <person name="Degtyarev S.K."/>
            <person name="Dryden D.T."/>
            <person name="Dybvig K."/>
            <person name="Firman K."/>
            <person name="Gromova E.S."/>
            <person name="Gumport R.I."/>
            <person name="Halford S.E."/>
            <person name="Hattman S."/>
            <person name="Heitman J."/>
            <person name="Hornby D.P."/>
            <person name="Janulaitis A."/>
            <person name="Jeltsch A."/>
            <person name="Josephsen J."/>
            <person name="Kiss A."/>
            <person name="Klaenhammer T.R."/>
            <person name="Kobayashi I."/>
            <person name="Kong H."/>
            <person name="Krueger D.H."/>
            <person name="Lacks S."/>
            <person name="Marinus M.G."/>
            <person name="Miyahara M."/>
            <person name="Morgan R.D."/>
            <person name="Murray N.E."/>
            <person name="Nagaraja V."/>
            <person name="Piekarowicz A."/>
            <person name="Pingoud A."/>
            <person name="Raleigh E."/>
            <person name="Rao D.N."/>
            <person name="Reich N."/>
            <person name="Repin V.E."/>
            <person name="Selker E.U."/>
            <person name="Shaw P.C."/>
            <person name="Stein D.C."/>
            <person name="Stoddard B.L."/>
            <person name="Szybalski W."/>
            <person name="Trautner T.A."/>
            <person name="Van Etten J.L."/>
            <person name="Vitor J.M."/>
            <person name="Wilson G.G."/>
            <person name="Xu S.Y."/>
        </authorList>
    </citation>
    <scope>NOMENCLATURE</scope>
    <scope>SUBTYPE</scope>
</reference>
<gene>
    <name type="primary">bglIR</name>
</gene>
<name>T2B1_BACIU</name>
<sequence>MYNLHREKIFMSYNQNKQYLEDNPEIQEKIELYGLNLLNEVISDNEEEIRADYNEANFLHPFWMNYPPLDRGKMPKGDQIPWIEVGEKAVGSKLTRLVSQREDITVREIGLPTGPDERYLLTSPTIYSLTNGFTDSIMMFVDIKSVGPRDSDYDLVLSPNQVSGNGDWAQLEGGIQNNQQTIQGPRSSQIFLPTIPPLYILSDGTIAPVVHLFIKPIYAMRSLTKGDTGQSLYKIKLASVPNGLGLFCNPGYAFDSAYKFLFRPGKDDRTKSLLQKRVRVDLRVLDKIGPRVMTIDMDK</sequence>